<protein>
    <recommendedName>
        <fullName evidence="1">ATP synthase subunit alpha</fullName>
        <ecNumber evidence="1">7.1.2.2</ecNumber>
    </recommendedName>
    <alternativeName>
        <fullName evidence="1">ATP synthase F1 sector subunit alpha</fullName>
    </alternativeName>
    <alternativeName>
        <fullName evidence="1">F-ATPase subunit alpha</fullName>
    </alternativeName>
</protein>
<accession>A6QB61</accession>
<evidence type="ECO:0000255" key="1">
    <source>
        <dbReference type="HAMAP-Rule" id="MF_01346"/>
    </source>
</evidence>
<proteinExistence type="inferred from homology"/>
<name>ATPA_SULNB</name>
<gene>
    <name evidence="1" type="primary">atpA</name>
    <name type="ordered locus">SUN_1773</name>
</gene>
<reference key="1">
    <citation type="journal article" date="2007" name="Proc. Natl. Acad. Sci. U.S.A.">
        <title>Deep-sea vent epsilon-proteobacterial genomes provide insights into emergence of pathogens.</title>
        <authorList>
            <person name="Nakagawa S."/>
            <person name="Takaki Y."/>
            <person name="Shimamura S."/>
            <person name="Reysenbach A.-L."/>
            <person name="Takai K."/>
            <person name="Horikoshi K."/>
        </authorList>
    </citation>
    <scope>NUCLEOTIDE SEQUENCE [LARGE SCALE GENOMIC DNA]</scope>
    <source>
        <strain>NBC37-1</strain>
    </source>
</reference>
<sequence length="504" mass="54315">MAVKLQADEISSIIKERIENFEIDVDINEIGKVVGIADGITTVYGLNNVMAGEVVEFDNGAKGLVLNLEEANVGVVVLGTSAGIKEGMSVKRSGALLKTPVGDGLMGRVVNPLGDPIDGKGTIETAEYRFIEEKAPGIMARKSVHEPLQTGIKAIDALVPVGRGQRELIIGDRQTGKTTLAIDTIINQKGQDVVCIYVAIGQKQSTVAATVKKLEEHGALDYTIIVNAGASDSAALQFLAPYAGVTMAEYFRDNGRHAVIFYDDLSKHAVAYREMSLILRRPPGREAYPGDVFYLHSRLLERAAKLSDELGAGSITAFPIIETQAGDVAAYIPTNVISITDGQIFLETDLFNSGIRPAINVGLSVSRVGGAAQIKAIKQVSGTLRLDLASFRELQAFAQFASDLDDYTRSQLERGQRMVEVLKQGPYVPVPVEKQVVIIFAGANGYLDDIAASSVTKFEAELMPFMEAKYASVLDAIRNEKKISDDTDAQLRKAIEDFKTSFAG</sequence>
<keyword id="KW-0066">ATP synthesis</keyword>
<keyword id="KW-0067">ATP-binding</keyword>
<keyword id="KW-0997">Cell inner membrane</keyword>
<keyword id="KW-1003">Cell membrane</keyword>
<keyword id="KW-0139">CF(1)</keyword>
<keyword id="KW-0375">Hydrogen ion transport</keyword>
<keyword id="KW-0406">Ion transport</keyword>
<keyword id="KW-0472">Membrane</keyword>
<keyword id="KW-0547">Nucleotide-binding</keyword>
<keyword id="KW-1278">Translocase</keyword>
<keyword id="KW-0813">Transport</keyword>
<comment type="function">
    <text evidence="1">Produces ATP from ADP in the presence of a proton gradient across the membrane. The alpha chain is a regulatory subunit.</text>
</comment>
<comment type="catalytic activity">
    <reaction evidence="1">
        <text>ATP + H2O + 4 H(+)(in) = ADP + phosphate + 5 H(+)(out)</text>
        <dbReference type="Rhea" id="RHEA:57720"/>
        <dbReference type="ChEBI" id="CHEBI:15377"/>
        <dbReference type="ChEBI" id="CHEBI:15378"/>
        <dbReference type="ChEBI" id="CHEBI:30616"/>
        <dbReference type="ChEBI" id="CHEBI:43474"/>
        <dbReference type="ChEBI" id="CHEBI:456216"/>
        <dbReference type="EC" id="7.1.2.2"/>
    </reaction>
</comment>
<comment type="subunit">
    <text evidence="1">F-type ATPases have 2 components, CF(1) - the catalytic core - and CF(0) - the membrane proton channel. CF(1) has five subunits: alpha(3), beta(3), gamma(1), delta(1), epsilon(1). CF(0) has three main subunits: a(1), b(2) and c(9-12). The alpha and beta chains form an alternating ring which encloses part of the gamma chain. CF(1) is attached to CF(0) by a central stalk formed by the gamma and epsilon chains, while a peripheral stalk is formed by the delta and b chains.</text>
</comment>
<comment type="subcellular location">
    <subcellularLocation>
        <location evidence="1">Cell inner membrane</location>
        <topology evidence="1">Peripheral membrane protein</topology>
    </subcellularLocation>
</comment>
<comment type="similarity">
    <text evidence="1">Belongs to the ATPase alpha/beta chains family.</text>
</comment>
<dbReference type="EC" id="7.1.2.2" evidence="1"/>
<dbReference type="EMBL" id="AP009179">
    <property type="protein sequence ID" value="BAF72720.1"/>
    <property type="molecule type" value="Genomic_DNA"/>
</dbReference>
<dbReference type="RefSeq" id="WP_012083530.1">
    <property type="nucleotide sequence ID" value="NC_009663.1"/>
</dbReference>
<dbReference type="SMR" id="A6QB61"/>
<dbReference type="STRING" id="387093.SUN_1773"/>
<dbReference type="KEGG" id="sun:SUN_1773"/>
<dbReference type="eggNOG" id="COG0056">
    <property type="taxonomic scope" value="Bacteria"/>
</dbReference>
<dbReference type="HOGENOM" id="CLU_010091_2_1_7"/>
<dbReference type="OrthoDB" id="9803053at2"/>
<dbReference type="Proteomes" id="UP000006378">
    <property type="component" value="Chromosome"/>
</dbReference>
<dbReference type="GO" id="GO:0005886">
    <property type="term" value="C:plasma membrane"/>
    <property type="evidence" value="ECO:0007669"/>
    <property type="project" value="UniProtKB-SubCell"/>
</dbReference>
<dbReference type="GO" id="GO:0045259">
    <property type="term" value="C:proton-transporting ATP synthase complex"/>
    <property type="evidence" value="ECO:0007669"/>
    <property type="project" value="UniProtKB-KW"/>
</dbReference>
<dbReference type="GO" id="GO:0043531">
    <property type="term" value="F:ADP binding"/>
    <property type="evidence" value="ECO:0007669"/>
    <property type="project" value="TreeGrafter"/>
</dbReference>
<dbReference type="GO" id="GO:0005524">
    <property type="term" value="F:ATP binding"/>
    <property type="evidence" value="ECO:0007669"/>
    <property type="project" value="UniProtKB-UniRule"/>
</dbReference>
<dbReference type="GO" id="GO:0046933">
    <property type="term" value="F:proton-transporting ATP synthase activity, rotational mechanism"/>
    <property type="evidence" value="ECO:0007669"/>
    <property type="project" value="UniProtKB-UniRule"/>
</dbReference>
<dbReference type="CDD" id="cd18113">
    <property type="entry name" value="ATP-synt_F1_alpha_C"/>
    <property type="match status" value="1"/>
</dbReference>
<dbReference type="CDD" id="cd18116">
    <property type="entry name" value="ATP-synt_F1_alpha_N"/>
    <property type="match status" value="1"/>
</dbReference>
<dbReference type="CDD" id="cd01132">
    <property type="entry name" value="F1-ATPase_alpha_CD"/>
    <property type="match status" value="1"/>
</dbReference>
<dbReference type="FunFam" id="1.20.150.20:FF:000001">
    <property type="entry name" value="ATP synthase subunit alpha"/>
    <property type="match status" value="1"/>
</dbReference>
<dbReference type="FunFam" id="2.40.30.20:FF:000001">
    <property type="entry name" value="ATP synthase subunit alpha"/>
    <property type="match status" value="1"/>
</dbReference>
<dbReference type="FunFam" id="3.40.50.300:FF:000002">
    <property type="entry name" value="ATP synthase subunit alpha"/>
    <property type="match status" value="1"/>
</dbReference>
<dbReference type="Gene3D" id="2.40.30.20">
    <property type="match status" value="1"/>
</dbReference>
<dbReference type="Gene3D" id="1.20.150.20">
    <property type="entry name" value="ATP synthase alpha/beta chain, C-terminal domain"/>
    <property type="match status" value="1"/>
</dbReference>
<dbReference type="Gene3D" id="3.40.50.300">
    <property type="entry name" value="P-loop containing nucleotide triphosphate hydrolases"/>
    <property type="match status" value="1"/>
</dbReference>
<dbReference type="HAMAP" id="MF_01346">
    <property type="entry name" value="ATP_synth_alpha_bact"/>
    <property type="match status" value="1"/>
</dbReference>
<dbReference type="InterPro" id="IPR023366">
    <property type="entry name" value="ATP_synth_asu-like_sf"/>
</dbReference>
<dbReference type="InterPro" id="IPR000793">
    <property type="entry name" value="ATP_synth_asu_C"/>
</dbReference>
<dbReference type="InterPro" id="IPR038376">
    <property type="entry name" value="ATP_synth_asu_C_sf"/>
</dbReference>
<dbReference type="InterPro" id="IPR033732">
    <property type="entry name" value="ATP_synth_F1_a_nt-bd_dom"/>
</dbReference>
<dbReference type="InterPro" id="IPR005294">
    <property type="entry name" value="ATP_synth_F1_asu"/>
</dbReference>
<dbReference type="InterPro" id="IPR020003">
    <property type="entry name" value="ATPase_a/bsu_AS"/>
</dbReference>
<dbReference type="InterPro" id="IPR004100">
    <property type="entry name" value="ATPase_F1/V1/A1_a/bsu_N"/>
</dbReference>
<dbReference type="InterPro" id="IPR036121">
    <property type="entry name" value="ATPase_F1/V1/A1_a/bsu_N_sf"/>
</dbReference>
<dbReference type="InterPro" id="IPR000194">
    <property type="entry name" value="ATPase_F1/V1/A1_a/bsu_nucl-bd"/>
</dbReference>
<dbReference type="InterPro" id="IPR027417">
    <property type="entry name" value="P-loop_NTPase"/>
</dbReference>
<dbReference type="NCBIfam" id="TIGR00962">
    <property type="entry name" value="atpA"/>
    <property type="match status" value="1"/>
</dbReference>
<dbReference type="NCBIfam" id="NF009884">
    <property type="entry name" value="PRK13343.1"/>
    <property type="match status" value="1"/>
</dbReference>
<dbReference type="PANTHER" id="PTHR48082">
    <property type="entry name" value="ATP SYNTHASE SUBUNIT ALPHA, MITOCHONDRIAL"/>
    <property type="match status" value="1"/>
</dbReference>
<dbReference type="PANTHER" id="PTHR48082:SF2">
    <property type="entry name" value="ATP SYNTHASE SUBUNIT ALPHA, MITOCHONDRIAL"/>
    <property type="match status" value="1"/>
</dbReference>
<dbReference type="Pfam" id="PF00006">
    <property type="entry name" value="ATP-synt_ab"/>
    <property type="match status" value="1"/>
</dbReference>
<dbReference type="Pfam" id="PF00306">
    <property type="entry name" value="ATP-synt_ab_C"/>
    <property type="match status" value="1"/>
</dbReference>
<dbReference type="Pfam" id="PF02874">
    <property type="entry name" value="ATP-synt_ab_N"/>
    <property type="match status" value="1"/>
</dbReference>
<dbReference type="PIRSF" id="PIRSF039088">
    <property type="entry name" value="F_ATPase_subunit_alpha"/>
    <property type="match status" value="1"/>
</dbReference>
<dbReference type="SUPFAM" id="SSF47917">
    <property type="entry name" value="C-terminal domain of alpha and beta subunits of F1 ATP synthase"/>
    <property type="match status" value="1"/>
</dbReference>
<dbReference type="SUPFAM" id="SSF50615">
    <property type="entry name" value="N-terminal domain of alpha and beta subunits of F1 ATP synthase"/>
    <property type="match status" value="1"/>
</dbReference>
<dbReference type="SUPFAM" id="SSF52540">
    <property type="entry name" value="P-loop containing nucleoside triphosphate hydrolases"/>
    <property type="match status" value="1"/>
</dbReference>
<dbReference type="PROSITE" id="PS00152">
    <property type="entry name" value="ATPASE_ALPHA_BETA"/>
    <property type="match status" value="1"/>
</dbReference>
<feature type="chain" id="PRO_1000086904" description="ATP synthase subunit alpha">
    <location>
        <begin position="1"/>
        <end position="504"/>
    </location>
</feature>
<feature type="binding site" evidence="1">
    <location>
        <begin position="171"/>
        <end position="178"/>
    </location>
    <ligand>
        <name>ATP</name>
        <dbReference type="ChEBI" id="CHEBI:30616"/>
    </ligand>
</feature>
<feature type="site" description="Required for activity" evidence="1">
    <location>
        <position position="364"/>
    </location>
</feature>
<organism>
    <name type="scientific">Sulfurovum sp. (strain NBC37-1)</name>
    <dbReference type="NCBI Taxonomy" id="387093"/>
    <lineage>
        <taxon>Bacteria</taxon>
        <taxon>Pseudomonadati</taxon>
        <taxon>Campylobacterota</taxon>
        <taxon>Epsilonproteobacteria</taxon>
        <taxon>Campylobacterales</taxon>
        <taxon>Sulfurovaceae</taxon>
        <taxon>Sulfurovum</taxon>
    </lineage>
</organism>